<sequence>MAYILPGSSLDADLYAITDDALSFNRSVIEVVKQLLDAGIRIIQYREKNKSSNSMLKDCITIKKLTEEANACFIVNDHVDIAVLCNADGVHLGQDDLPVDKVRELIGKEKIIGLSTHSPQQAQKAIEMGADYIGVGPLYPTKTKKDVCEPVTISYLDWVVSHIAIPFVAIGGIKQHNIQEVIQHGAKCCALVSEILSAPNIPLRIQELRQAILLAHT</sequence>
<gene>
    <name evidence="1" type="primary">thiE</name>
    <name type="ordered locus">LI0324</name>
</gene>
<feature type="chain" id="PRO_0000336403" description="Thiamine-phosphate synthase">
    <location>
        <begin position="1"/>
        <end position="217"/>
    </location>
</feature>
<feature type="binding site" evidence="1">
    <location>
        <begin position="44"/>
        <end position="48"/>
    </location>
    <ligand>
        <name>4-amino-2-methyl-5-(diphosphooxymethyl)pyrimidine</name>
        <dbReference type="ChEBI" id="CHEBI:57841"/>
    </ligand>
</feature>
<feature type="binding site" evidence="1">
    <location>
        <position position="76"/>
    </location>
    <ligand>
        <name>4-amino-2-methyl-5-(diphosphooxymethyl)pyrimidine</name>
        <dbReference type="ChEBI" id="CHEBI:57841"/>
    </ligand>
</feature>
<feature type="binding site" evidence="1">
    <location>
        <position position="77"/>
    </location>
    <ligand>
        <name>Mg(2+)</name>
        <dbReference type="ChEBI" id="CHEBI:18420"/>
    </ligand>
</feature>
<feature type="binding site" evidence="1">
    <location>
        <position position="96"/>
    </location>
    <ligand>
        <name>Mg(2+)</name>
        <dbReference type="ChEBI" id="CHEBI:18420"/>
    </ligand>
</feature>
<feature type="binding site" evidence="1">
    <location>
        <position position="115"/>
    </location>
    <ligand>
        <name>4-amino-2-methyl-5-(diphosphooxymethyl)pyrimidine</name>
        <dbReference type="ChEBI" id="CHEBI:57841"/>
    </ligand>
</feature>
<feature type="binding site" evidence="1">
    <location>
        <begin position="141"/>
        <end position="143"/>
    </location>
    <ligand>
        <name>2-[(2R,5Z)-2-carboxy-4-methylthiazol-5(2H)-ylidene]ethyl phosphate</name>
        <dbReference type="ChEBI" id="CHEBI:62899"/>
    </ligand>
</feature>
<feature type="binding site" evidence="1">
    <location>
        <position position="144"/>
    </location>
    <ligand>
        <name>4-amino-2-methyl-5-(diphosphooxymethyl)pyrimidine</name>
        <dbReference type="ChEBI" id="CHEBI:57841"/>
    </ligand>
</feature>
<feature type="binding site" evidence="1">
    <location>
        <position position="172"/>
    </location>
    <ligand>
        <name>2-[(2R,5Z)-2-carboxy-4-methylthiazol-5(2H)-ylidene]ethyl phosphate</name>
        <dbReference type="ChEBI" id="CHEBI:62899"/>
    </ligand>
</feature>
<feature type="binding site" evidence="1">
    <location>
        <begin position="192"/>
        <end position="193"/>
    </location>
    <ligand>
        <name>2-[(2R,5Z)-2-carboxy-4-methylthiazol-5(2H)-ylidene]ethyl phosphate</name>
        <dbReference type="ChEBI" id="CHEBI:62899"/>
    </ligand>
</feature>
<organism>
    <name type="scientific">Lawsonia intracellularis (strain PHE/MN1-00)</name>
    <dbReference type="NCBI Taxonomy" id="363253"/>
    <lineage>
        <taxon>Bacteria</taxon>
        <taxon>Pseudomonadati</taxon>
        <taxon>Thermodesulfobacteriota</taxon>
        <taxon>Desulfovibrionia</taxon>
        <taxon>Desulfovibrionales</taxon>
        <taxon>Desulfovibrionaceae</taxon>
        <taxon>Lawsonia</taxon>
    </lineage>
</organism>
<evidence type="ECO:0000255" key="1">
    <source>
        <dbReference type="HAMAP-Rule" id="MF_00097"/>
    </source>
</evidence>
<name>THIE_LAWIP</name>
<dbReference type="EC" id="2.5.1.3" evidence="1"/>
<dbReference type="EMBL" id="AM180252">
    <property type="protein sequence ID" value="CAJ54380.1"/>
    <property type="molecule type" value="Genomic_DNA"/>
</dbReference>
<dbReference type="RefSeq" id="WP_011526409.1">
    <property type="nucleotide sequence ID" value="NC_008011.1"/>
</dbReference>
<dbReference type="SMR" id="Q1MRJ6"/>
<dbReference type="STRING" id="363253.LI0324"/>
<dbReference type="KEGG" id="lip:LI0324"/>
<dbReference type="eggNOG" id="COG0352">
    <property type="taxonomic scope" value="Bacteria"/>
</dbReference>
<dbReference type="HOGENOM" id="CLU_018272_3_2_7"/>
<dbReference type="OrthoDB" id="9810880at2"/>
<dbReference type="UniPathway" id="UPA00060">
    <property type="reaction ID" value="UER00141"/>
</dbReference>
<dbReference type="Proteomes" id="UP000002430">
    <property type="component" value="Chromosome"/>
</dbReference>
<dbReference type="GO" id="GO:0005737">
    <property type="term" value="C:cytoplasm"/>
    <property type="evidence" value="ECO:0007669"/>
    <property type="project" value="TreeGrafter"/>
</dbReference>
<dbReference type="GO" id="GO:0000287">
    <property type="term" value="F:magnesium ion binding"/>
    <property type="evidence" value="ECO:0007669"/>
    <property type="project" value="UniProtKB-UniRule"/>
</dbReference>
<dbReference type="GO" id="GO:0004789">
    <property type="term" value="F:thiamine-phosphate diphosphorylase activity"/>
    <property type="evidence" value="ECO:0007669"/>
    <property type="project" value="UniProtKB-UniRule"/>
</dbReference>
<dbReference type="GO" id="GO:0009228">
    <property type="term" value="P:thiamine biosynthetic process"/>
    <property type="evidence" value="ECO:0007669"/>
    <property type="project" value="UniProtKB-KW"/>
</dbReference>
<dbReference type="GO" id="GO:0009229">
    <property type="term" value="P:thiamine diphosphate biosynthetic process"/>
    <property type="evidence" value="ECO:0007669"/>
    <property type="project" value="UniProtKB-UniRule"/>
</dbReference>
<dbReference type="CDD" id="cd00564">
    <property type="entry name" value="TMP_TenI"/>
    <property type="match status" value="1"/>
</dbReference>
<dbReference type="FunFam" id="3.20.20.70:FF:000096">
    <property type="entry name" value="Thiamine-phosphate synthase"/>
    <property type="match status" value="1"/>
</dbReference>
<dbReference type="Gene3D" id="3.20.20.70">
    <property type="entry name" value="Aldolase class I"/>
    <property type="match status" value="1"/>
</dbReference>
<dbReference type="HAMAP" id="MF_00097">
    <property type="entry name" value="TMP_synthase"/>
    <property type="match status" value="1"/>
</dbReference>
<dbReference type="InterPro" id="IPR013785">
    <property type="entry name" value="Aldolase_TIM"/>
</dbReference>
<dbReference type="InterPro" id="IPR036206">
    <property type="entry name" value="ThiamineP_synth_sf"/>
</dbReference>
<dbReference type="InterPro" id="IPR022998">
    <property type="entry name" value="ThiamineP_synth_TenI"/>
</dbReference>
<dbReference type="InterPro" id="IPR034291">
    <property type="entry name" value="TMP_synthase"/>
</dbReference>
<dbReference type="NCBIfam" id="TIGR00693">
    <property type="entry name" value="thiE"/>
    <property type="match status" value="1"/>
</dbReference>
<dbReference type="PANTHER" id="PTHR20857">
    <property type="entry name" value="THIAMINE-PHOSPHATE PYROPHOSPHORYLASE"/>
    <property type="match status" value="1"/>
</dbReference>
<dbReference type="PANTHER" id="PTHR20857:SF15">
    <property type="entry name" value="THIAMINE-PHOSPHATE SYNTHASE"/>
    <property type="match status" value="1"/>
</dbReference>
<dbReference type="Pfam" id="PF02581">
    <property type="entry name" value="TMP-TENI"/>
    <property type="match status" value="1"/>
</dbReference>
<dbReference type="SUPFAM" id="SSF51391">
    <property type="entry name" value="Thiamin phosphate synthase"/>
    <property type="match status" value="1"/>
</dbReference>
<reference key="1">
    <citation type="submission" date="2005-11" db="EMBL/GenBank/DDBJ databases">
        <title>The complete genome sequence of Lawsonia intracellularis: the causative agent of proliferative enteropathy.</title>
        <authorList>
            <person name="Kaur K."/>
            <person name="Zhang Q."/>
            <person name="Beckler D."/>
            <person name="Munir S."/>
            <person name="Li L."/>
            <person name="Kinsley K."/>
            <person name="Herron L."/>
            <person name="Peterson A."/>
            <person name="May B."/>
            <person name="Singh S."/>
            <person name="Gebhart C."/>
            <person name="Kapur V."/>
        </authorList>
    </citation>
    <scope>NUCLEOTIDE SEQUENCE [LARGE SCALE GENOMIC DNA]</scope>
    <source>
        <strain>PHE/MN1-00</strain>
    </source>
</reference>
<proteinExistence type="inferred from homology"/>
<accession>Q1MRJ6</accession>
<keyword id="KW-0460">Magnesium</keyword>
<keyword id="KW-0479">Metal-binding</keyword>
<keyword id="KW-1185">Reference proteome</keyword>
<keyword id="KW-0784">Thiamine biosynthesis</keyword>
<keyword id="KW-0808">Transferase</keyword>
<protein>
    <recommendedName>
        <fullName evidence="1">Thiamine-phosphate synthase</fullName>
        <shortName evidence="1">TP synthase</shortName>
        <shortName evidence="1">TPS</shortName>
        <ecNumber evidence="1">2.5.1.3</ecNumber>
    </recommendedName>
    <alternativeName>
        <fullName evidence="1">Thiamine-phosphate pyrophosphorylase</fullName>
        <shortName evidence="1">TMP pyrophosphorylase</shortName>
        <shortName evidence="1">TMP-PPase</shortName>
    </alternativeName>
</protein>
<comment type="function">
    <text evidence="1">Condenses 4-methyl-5-(beta-hydroxyethyl)thiazole monophosphate (THZ-P) and 2-methyl-4-amino-5-hydroxymethyl pyrimidine pyrophosphate (HMP-PP) to form thiamine monophosphate (TMP).</text>
</comment>
<comment type="catalytic activity">
    <reaction evidence="1">
        <text>2-[(2R,5Z)-2-carboxy-4-methylthiazol-5(2H)-ylidene]ethyl phosphate + 4-amino-2-methyl-5-(diphosphooxymethyl)pyrimidine + 2 H(+) = thiamine phosphate + CO2 + diphosphate</text>
        <dbReference type="Rhea" id="RHEA:47844"/>
        <dbReference type="ChEBI" id="CHEBI:15378"/>
        <dbReference type="ChEBI" id="CHEBI:16526"/>
        <dbReference type="ChEBI" id="CHEBI:33019"/>
        <dbReference type="ChEBI" id="CHEBI:37575"/>
        <dbReference type="ChEBI" id="CHEBI:57841"/>
        <dbReference type="ChEBI" id="CHEBI:62899"/>
        <dbReference type="EC" id="2.5.1.3"/>
    </reaction>
</comment>
<comment type="catalytic activity">
    <reaction evidence="1">
        <text>2-(2-carboxy-4-methylthiazol-5-yl)ethyl phosphate + 4-amino-2-methyl-5-(diphosphooxymethyl)pyrimidine + 2 H(+) = thiamine phosphate + CO2 + diphosphate</text>
        <dbReference type="Rhea" id="RHEA:47848"/>
        <dbReference type="ChEBI" id="CHEBI:15378"/>
        <dbReference type="ChEBI" id="CHEBI:16526"/>
        <dbReference type="ChEBI" id="CHEBI:33019"/>
        <dbReference type="ChEBI" id="CHEBI:37575"/>
        <dbReference type="ChEBI" id="CHEBI:57841"/>
        <dbReference type="ChEBI" id="CHEBI:62890"/>
        <dbReference type="EC" id="2.5.1.3"/>
    </reaction>
</comment>
<comment type="catalytic activity">
    <reaction evidence="1">
        <text>4-methyl-5-(2-phosphooxyethyl)-thiazole + 4-amino-2-methyl-5-(diphosphooxymethyl)pyrimidine + H(+) = thiamine phosphate + diphosphate</text>
        <dbReference type="Rhea" id="RHEA:22328"/>
        <dbReference type="ChEBI" id="CHEBI:15378"/>
        <dbReference type="ChEBI" id="CHEBI:33019"/>
        <dbReference type="ChEBI" id="CHEBI:37575"/>
        <dbReference type="ChEBI" id="CHEBI:57841"/>
        <dbReference type="ChEBI" id="CHEBI:58296"/>
        <dbReference type="EC" id="2.5.1.3"/>
    </reaction>
</comment>
<comment type="cofactor">
    <cofactor evidence="1">
        <name>Mg(2+)</name>
        <dbReference type="ChEBI" id="CHEBI:18420"/>
    </cofactor>
    <text evidence="1">Binds 1 Mg(2+) ion per subunit.</text>
</comment>
<comment type="pathway">
    <text evidence="1">Cofactor biosynthesis; thiamine diphosphate biosynthesis; thiamine phosphate from 4-amino-2-methyl-5-diphosphomethylpyrimidine and 4-methyl-5-(2-phosphoethyl)-thiazole: step 1/1.</text>
</comment>
<comment type="similarity">
    <text evidence="1">Belongs to the thiamine-phosphate synthase family.</text>
</comment>